<protein>
    <recommendedName>
        <fullName evidence="1">Mannosyl-3-phosphoglycerate phosphatase</fullName>
        <shortName evidence="1">MPGP</shortName>
        <ecNumber evidence="1">3.1.3.70</ecNumber>
    </recommendedName>
</protein>
<gene>
    <name type="ordered locus">ECDH10B_2097</name>
</gene>
<reference key="1">
    <citation type="journal article" date="2008" name="J. Bacteriol.">
        <title>The complete genome sequence of Escherichia coli DH10B: insights into the biology of a laboratory workhorse.</title>
        <authorList>
            <person name="Durfee T."/>
            <person name="Nelson R."/>
            <person name="Baldwin S."/>
            <person name="Plunkett G. III"/>
            <person name="Burland V."/>
            <person name="Mau B."/>
            <person name="Petrosino J.F."/>
            <person name="Qin X."/>
            <person name="Muzny D.M."/>
            <person name="Ayele M."/>
            <person name="Gibbs R.A."/>
            <person name="Csorgo B."/>
            <person name="Posfai G."/>
            <person name="Weinstock G.M."/>
            <person name="Blattner F.R."/>
        </authorList>
    </citation>
    <scope>NUCLEOTIDE SEQUENCE [LARGE SCALE GENOMIC DNA]</scope>
    <source>
        <strain>K12 / DH10B</strain>
    </source>
</reference>
<comment type="catalytic activity">
    <reaction evidence="1">
        <text>2-O-(alpha-D-mannosyl)-3-phosphoglycerate + H2O = (2R)-2-O-(alpha-D-mannosyl)-glycerate + phosphate</text>
        <dbReference type="Rhea" id="RHEA:19309"/>
        <dbReference type="ChEBI" id="CHEBI:15377"/>
        <dbReference type="ChEBI" id="CHEBI:43474"/>
        <dbReference type="ChEBI" id="CHEBI:57541"/>
        <dbReference type="ChEBI" id="CHEBI:57744"/>
        <dbReference type="EC" id="3.1.3.70"/>
    </reaction>
</comment>
<comment type="cofactor">
    <cofactor evidence="1">
        <name>Mg(2+)</name>
        <dbReference type="ChEBI" id="CHEBI:18420"/>
    </cofactor>
</comment>
<comment type="subcellular location">
    <subcellularLocation>
        <location evidence="1">Cytoplasm</location>
    </subcellularLocation>
</comment>
<comment type="similarity">
    <text evidence="1">Belongs to the HAD-like hydrolase superfamily. MPGP family.</text>
</comment>
<keyword id="KW-0963">Cytoplasm</keyword>
<keyword id="KW-0378">Hydrolase</keyword>
<keyword id="KW-0460">Magnesium</keyword>
<keyword id="KW-0479">Metal-binding</keyword>
<feature type="chain" id="PRO_1000130434" description="Mannosyl-3-phosphoglycerate phosphatase">
    <location>
        <begin position="1"/>
        <end position="271"/>
    </location>
</feature>
<feature type="active site" description="Nucleophile" evidence="1">
    <location>
        <position position="13"/>
    </location>
</feature>
<feature type="binding site" evidence="1">
    <location>
        <position position="13"/>
    </location>
    <ligand>
        <name>Mg(2+)</name>
        <dbReference type="ChEBI" id="CHEBI:18420"/>
    </ligand>
</feature>
<feature type="binding site" evidence="1">
    <location>
        <position position="15"/>
    </location>
    <ligand>
        <name>Mg(2+)</name>
        <dbReference type="ChEBI" id="CHEBI:18420"/>
    </ligand>
</feature>
<feature type="binding site" evidence="1">
    <location>
        <position position="214"/>
    </location>
    <ligand>
        <name>Mg(2+)</name>
        <dbReference type="ChEBI" id="CHEBI:18420"/>
    </ligand>
</feature>
<sequence>MFSIQQPLLVFSDLDGTLLDSHSYDWQPAAPWLTRLREANVPVILCSSKTSAEMLYLQKTLGLQGLPLIAENGAVIQLAEQWQEIDGFPRIISGISHGEISLVLNTLREKEHFKFTTFDDVDDATIAEWTGLSRSQAALTQLHEASVTLIWRDSDERMAQFTARLNELGLQFMQGARFWHVLDASAGKDQAANWIIATYQQLSGKRPTTLGLGDGPNDAPLLEVMDYAVIVKGLNREGVHLHDEDPARVWRTQREGPEGWREGLDHFFSAR</sequence>
<name>MPGP_ECODH</name>
<proteinExistence type="inferred from homology"/>
<accession>B1X6A8</accession>
<dbReference type="EC" id="3.1.3.70" evidence="1"/>
<dbReference type="EMBL" id="CP000948">
    <property type="protein sequence ID" value="ACB03140.1"/>
    <property type="molecule type" value="Genomic_DNA"/>
</dbReference>
<dbReference type="RefSeq" id="WP_000491520.1">
    <property type="nucleotide sequence ID" value="NC_010473.1"/>
</dbReference>
<dbReference type="SMR" id="B1X6A8"/>
<dbReference type="KEGG" id="ecd:ECDH10B_2097"/>
<dbReference type="HOGENOM" id="CLU_063016_1_0_6"/>
<dbReference type="GO" id="GO:0005829">
    <property type="term" value="C:cytosol"/>
    <property type="evidence" value="ECO:0007669"/>
    <property type="project" value="TreeGrafter"/>
</dbReference>
<dbReference type="GO" id="GO:0000287">
    <property type="term" value="F:magnesium ion binding"/>
    <property type="evidence" value="ECO:0007669"/>
    <property type="project" value="TreeGrafter"/>
</dbReference>
<dbReference type="GO" id="GO:0050531">
    <property type="term" value="F:mannosyl-3-phosphoglycerate phosphatase activity"/>
    <property type="evidence" value="ECO:0007669"/>
    <property type="project" value="UniProtKB-UniRule"/>
</dbReference>
<dbReference type="GO" id="GO:0051479">
    <property type="term" value="P:mannosylglycerate biosynthetic process"/>
    <property type="evidence" value="ECO:0007669"/>
    <property type="project" value="InterPro"/>
</dbReference>
<dbReference type="CDD" id="cd07507">
    <property type="entry name" value="HAD_Pase"/>
    <property type="match status" value="1"/>
</dbReference>
<dbReference type="Gene3D" id="3.40.50.1000">
    <property type="entry name" value="HAD superfamily/HAD-like"/>
    <property type="match status" value="1"/>
</dbReference>
<dbReference type="Gene3D" id="3.30.980.20">
    <property type="entry name" value="Putative mannosyl-3-phosphoglycerate phosphatase, domain 2"/>
    <property type="match status" value="1"/>
</dbReference>
<dbReference type="HAMAP" id="MF_00617">
    <property type="entry name" value="MPGP_rel"/>
    <property type="match status" value="1"/>
</dbReference>
<dbReference type="InterPro" id="IPR036412">
    <property type="entry name" value="HAD-like_sf"/>
</dbReference>
<dbReference type="InterPro" id="IPR006381">
    <property type="entry name" value="HAD-SF-IIB-MPGP"/>
</dbReference>
<dbReference type="InterPro" id="IPR006379">
    <property type="entry name" value="HAD-SF_hydro_IIB"/>
</dbReference>
<dbReference type="InterPro" id="IPR023214">
    <property type="entry name" value="HAD_sf"/>
</dbReference>
<dbReference type="InterPro" id="IPR012815">
    <property type="entry name" value="MPG_Pase"/>
</dbReference>
<dbReference type="NCBIfam" id="TIGR01484">
    <property type="entry name" value="HAD-SF-IIB"/>
    <property type="match status" value="1"/>
</dbReference>
<dbReference type="NCBIfam" id="TIGR01486">
    <property type="entry name" value="HAD-SF-IIB-MPGP"/>
    <property type="match status" value="1"/>
</dbReference>
<dbReference type="NCBIfam" id="TIGR02463">
    <property type="entry name" value="MPGP_rel"/>
    <property type="match status" value="1"/>
</dbReference>
<dbReference type="NCBIfam" id="NF002976">
    <property type="entry name" value="PRK03669.1"/>
    <property type="match status" value="1"/>
</dbReference>
<dbReference type="PANTHER" id="PTHR10000:SF8">
    <property type="entry name" value="HAD SUPERFAMILY HYDROLASE-LIKE, TYPE 3"/>
    <property type="match status" value="1"/>
</dbReference>
<dbReference type="PANTHER" id="PTHR10000">
    <property type="entry name" value="PHOSPHOSERINE PHOSPHATASE"/>
    <property type="match status" value="1"/>
</dbReference>
<dbReference type="Pfam" id="PF08282">
    <property type="entry name" value="Hydrolase_3"/>
    <property type="match status" value="1"/>
</dbReference>
<dbReference type="SFLD" id="SFLDG01142">
    <property type="entry name" value="C2.B.2:_Mannosyl-3-phosphoglyc"/>
    <property type="match status" value="1"/>
</dbReference>
<dbReference type="SFLD" id="SFLDS00003">
    <property type="entry name" value="Haloacid_Dehalogenase"/>
    <property type="match status" value="1"/>
</dbReference>
<dbReference type="SUPFAM" id="SSF56784">
    <property type="entry name" value="HAD-like"/>
    <property type="match status" value="1"/>
</dbReference>
<evidence type="ECO:0000255" key="1">
    <source>
        <dbReference type="HAMAP-Rule" id="MF_00617"/>
    </source>
</evidence>
<organism>
    <name type="scientific">Escherichia coli (strain K12 / DH10B)</name>
    <dbReference type="NCBI Taxonomy" id="316385"/>
    <lineage>
        <taxon>Bacteria</taxon>
        <taxon>Pseudomonadati</taxon>
        <taxon>Pseudomonadota</taxon>
        <taxon>Gammaproteobacteria</taxon>
        <taxon>Enterobacterales</taxon>
        <taxon>Enterobacteriaceae</taxon>
        <taxon>Escherichia</taxon>
    </lineage>
</organism>